<protein>
    <recommendedName>
        <fullName>E3 ubiquitin-protein ligase pellino homolog 1</fullName>
        <shortName>Pellino-1</shortName>
        <ecNumber>2.3.2.27</ecNumber>
    </recommendedName>
    <alternativeName>
        <fullName evidence="8">RING-type E3 ubiquitin transferase pellino homolog 1</fullName>
    </alternativeName>
</protein>
<dbReference type="EC" id="2.3.2.27"/>
<dbReference type="EMBL" id="AF302503">
    <property type="protein sequence ID" value="AAG15391.1"/>
    <property type="molecule type" value="mRNA"/>
</dbReference>
<dbReference type="EMBL" id="AK009945">
    <property type="protein sequence ID" value="BAB26600.1"/>
    <property type="molecule type" value="mRNA"/>
</dbReference>
<dbReference type="EMBL" id="AK045673">
    <property type="protein sequence ID" value="BAC32452.1"/>
    <property type="molecule type" value="mRNA"/>
</dbReference>
<dbReference type="EMBL" id="AK076458">
    <property type="protein sequence ID" value="BAC36351.1"/>
    <property type="status" value="ALT_INIT"/>
    <property type="molecule type" value="mRNA"/>
</dbReference>
<dbReference type="EMBL" id="BC016515">
    <property type="protein sequence ID" value="AAH16515.1"/>
    <property type="molecule type" value="mRNA"/>
</dbReference>
<dbReference type="CCDS" id="CCDS24462.1"/>
<dbReference type="RefSeq" id="NP_075813.2">
    <property type="nucleotide sequence ID" value="NM_023324.2"/>
</dbReference>
<dbReference type="SMR" id="Q8C669"/>
<dbReference type="BioGRID" id="212043">
    <property type="interactions" value="9"/>
</dbReference>
<dbReference type="DIP" id="DIP-48336N"/>
<dbReference type="FunCoup" id="Q8C669">
    <property type="interactions" value="3460"/>
</dbReference>
<dbReference type="IntAct" id="Q8C669">
    <property type="interactions" value="2"/>
</dbReference>
<dbReference type="STRING" id="10090.ENSMUSP00000099018"/>
<dbReference type="iPTMnet" id="Q8C669"/>
<dbReference type="PhosphoSitePlus" id="Q8C669"/>
<dbReference type="PaxDb" id="10090-ENSMUSP00000090979"/>
<dbReference type="ProteomicsDB" id="287824"/>
<dbReference type="Pumba" id="Q8C669"/>
<dbReference type="Antibodypedia" id="16046">
    <property type="antibodies" value="239 antibodies from 29 providers"/>
</dbReference>
<dbReference type="DNASU" id="67245"/>
<dbReference type="Ensembl" id="ENSMUST00000093290.12">
    <property type="protein sequence ID" value="ENSMUSP00000090979.6"/>
    <property type="gene ID" value="ENSMUSG00000020134.14"/>
</dbReference>
<dbReference type="Ensembl" id="ENSMUST00000101477.2">
    <property type="protein sequence ID" value="ENSMUSP00000099018.2"/>
    <property type="gene ID" value="ENSMUSG00000020134.14"/>
</dbReference>
<dbReference type="GeneID" id="67245"/>
<dbReference type="KEGG" id="mmu:67245"/>
<dbReference type="UCSC" id="uc007idl.1">
    <property type="organism name" value="mouse"/>
</dbReference>
<dbReference type="AGR" id="MGI:1914495"/>
<dbReference type="CTD" id="57162"/>
<dbReference type="MGI" id="MGI:1914495">
    <property type="gene designation" value="Peli1"/>
</dbReference>
<dbReference type="VEuPathDB" id="HostDB:ENSMUSG00000020134"/>
<dbReference type="eggNOG" id="KOG3842">
    <property type="taxonomic scope" value="Eukaryota"/>
</dbReference>
<dbReference type="GeneTree" id="ENSGT00950000183050"/>
<dbReference type="HOGENOM" id="CLU_029221_2_0_1"/>
<dbReference type="InParanoid" id="Q8C669"/>
<dbReference type="OMA" id="QIGRMPC"/>
<dbReference type="OrthoDB" id="8801906at2759"/>
<dbReference type="PhylomeDB" id="Q8C669"/>
<dbReference type="TreeFam" id="TF314338"/>
<dbReference type="Reactome" id="R-MMU-5675482">
    <property type="pathway name" value="Regulation of necroptotic cell death"/>
</dbReference>
<dbReference type="Reactome" id="R-MMU-9020702">
    <property type="pathway name" value="Interleukin-1 signaling"/>
</dbReference>
<dbReference type="Reactome" id="R-MMU-937039">
    <property type="pathway name" value="IRAK1 recruits IKK complex"/>
</dbReference>
<dbReference type="Reactome" id="R-MMU-975144">
    <property type="pathway name" value="IRAK1 recruits IKK complex upon TLR7/8 or 9 stimulation"/>
</dbReference>
<dbReference type="UniPathway" id="UPA00143"/>
<dbReference type="BioGRID-ORCS" id="67245">
    <property type="hits" value="6 hits in 79 CRISPR screens"/>
</dbReference>
<dbReference type="ChiTaRS" id="Peli1">
    <property type="organism name" value="mouse"/>
</dbReference>
<dbReference type="PRO" id="PR:Q8C669"/>
<dbReference type="Proteomes" id="UP000000589">
    <property type="component" value="Chromosome 11"/>
</dbReference>
<dbReference type="RNAct" id="Q8C669">
    <property type="molecule type" value="protein"/>
</dbReference>
<dbReference type="Bgee" id="ENSMUSG00000020134">
    <property type="expression patterns" value="Expressed in medial ganglionic eminence and 266 other cell types or tissues"/>
</dbReference>
<dbReference type="ExpressionAtlas" id="Q8C669">
    <property type="expression patterns" value="baseline and differential"/>
</dbReference>
<dbReference type="GO" id="GO:0005634">
    <property type="term" value="C:nucleus"/>
    <property type="evidence" value="ECO:0000314"/>
    <property type="project" value="MGI"/>
</dbReference>
<dbReference type="GO" id="GO:0035861">
    <property type="term" value="C:site of double-strand break"/>
    <property type="evidence" value="ECO:0007669"/>
    <property type="project" value="Ensembl"/>
</dbReference>
<dbReference type="GO" id="GO:0061630">
    <property type="term" value="F:ubiquitin protein ligase activity"/>
    <property type="evidence" value="ECO:0000314"/>
    <property type="project" value="MGI"/>
</dbReference>
<dbReference type="GO" id="GO:0004842">
    <property type="term" value="F:ubiquitin-protein transferase activity"/>
    <property type="evidence" value="ECO:0000314"/>
    <property type="project" value="MGI"/>
</dbReference>
<dbReference type="GO" id="GO:0034450">
    <property type="term" value="F:ubiquitin-ubiquitin ligase activity"/>
    <property type="evidence" value="ECO:0007669"/>
    <property type="project" value="Ensembl"/>
</dbReference>
<dbReference type="GO" id="GO:0006281">
    <property type="term" value="P:DNA repair"/>
    <property type="evidence" value="ECO:0007669"/>
    <property type="project" value="UniProtKB-KW"/>
</dbReference>
<dbReference type="GO" id="GO:0060546">
    <property type="term" value="P:negative regulation of necroptotic process"/>
    <property type="evidence" value="ECO:0000315"/>
    <property type="project" value="UniProtKB"/>
</dbReference>
<dbReference type="GO" id="GO:0050868">
    <property type="term" value="P:negative regulation of T cell activation"/>
    <property type="evidence" value="ECO:0000315"/>
    <property type="project" value="MGI"/>
</dbReference>
<dbReference type="GO" id="GO:0042130">
    <property type="term" value="P:negative regulation of T cell proliferation"/>
    <property type="evidence" value="ECO:0000315"/>
    <property type="project" value="MGI"/>
</dbReference>
<dbReference type="GO" id="GO:1904262">
    <property type="term" value="P:negative regulation of TORC1 signaling"/>
    <property type="evidence" value="ECO:0007669"/>
    <property type="project" value="Ensembl"/>
</dbReference>
<dbReference type="GO" id="GO:0050871">
    <property type="term" value="P:positive regulation of B cell activation"/>
    <property type="evidence" value="ECO:0000315"/>
    <property type="project" value="MGI"/>
</dbReference>
<dbReference type="GO" id="GO:0030890">
    <property type="term" value="P:positive regulation of B cell proliferation"/>
    <property type="evidence" value="ECO:0000315"/>
    <property type="project" value="MGI"/>
</dbReference>
<dbReference type="GO" id="GO:0043123">
    <property type="term" value="P:positive regulation of canonical NF-kappaB signal transduction"/>
    <property type="evidence" value="ECO:0000315"/>
    <property type="project" value="MGI"/>
</dbReference>
<dbReference type="GO" id="GO:0001819">
    <property type="term" value="P:positive regulation of cytokine production"/>
    <property type="evidence" value="ECO:0000315"/>
    <property type="project" value="MGI"/>
</dbReference>
<dbReference type="GO" id="GO:1905168">
    <property type="term" value="P:positive regulation of double-strand break repair via homologous recombination"/>
    <property type="evidence" value="ECO:0007669"/>
    <property type="project" value="Ensembl"/>
</dbReference>
<dbReference type="GO" id="GO:0031398">
    <property type="term" value="P:positive regulation of protein ubiquitination"/>
    <property type="evidence" value="ECO:0000315"/>
    <property type="project" value="MGI"/>
</dbReference>
<dbReference type="GO" id="GO:0034141">
    <property type="term" value="P:positive regulation of toll-like receptor 3 signaling pathway"/>
    <property type="evidence" value="ECO:0000315"/>
    <property type="project" value="MGI"/>
</dbReference>
<dbReference type="GO" id="GO:0034145">
    <property type="term" value="P:positive regulation of toll-like receptor 4 signaling pathway"/>
    <property type="evidence" value="ECO:0000315"/>
    <property type="project" value="MGI"/>
</dbReference>
<dbReference type="GO" id="GO:0043161">
    <property type="term" value="P:proteasome-mediated ubiquitin-dependent protein catabolic process"/>
    <property type="evidence" value="ECO:0000250"/>
    <property type="project" value="UniProtKB"/>
</dbReference>
<dbReference type="GO" id="GO:0070936">
    <property type="term" value="P:protein K48-linked ubiquitination"/>
    <property type="evidence" value="ECO:0000314"/>
    <property type="project" value="MGI"/>
</dbReference>
<dbReference type="GO" id="GO:0070534">
    <property type="term" value="P:protein K63-linked ubiquitination"/>
    <property type="evidence" value="ECO:0000250"/>
    <property type="project" value="UniProtKB"/>
</dbReference>
<dbReference type="GO" id="GO:0000209">
    <property type="term" value="P:protein polyubiquitination"/>
    <property type="evidence" value="ECO:0000315"/>
    <property type="project" value="MGI"/>
</dbReference>
<dbReference type="GO" id="GO:0008592">
    <property type="term" value="P:regulation of Toll signaling pathway"/>
    <property type="evidence" value="ECO:0007669"/>
    <property type="project" value="InterPro"/>
</dbReference>
<dbReference type="GO" id="GO:0043331">
    <property type="term" value="P:response to dsRNA"/>
    <property type="evidence" value="ECO:0000315"/>
    <property type="project" value="MGI"/>
</dbReference>
<dbReference type="GO" id="GO:0032496">
    <property type="term" value="P:response to lipopolysaccharide"/>
    <property type="evidence" value="ECO:0000315"/>
    <property type="project" value="MGI"/>
</dbReference>
<dbReference type="GO" id="GO:0042110">
    <property type="term" value="P:T cell activation"/>
    <property type="evidence" value="ECO:0000315"/>
    <property type="project" value="MGI"/>
</dbReference>
<dbReference type="GO" id="GO:0042098">
    <property type="term" value="P:T cell proliferation"/>
    <property type="evidence" value="ECO:0000315"/>
    <property type="project" value="MGI"/>
</dbReference>
<dbReference type="InterPro" id="IPR006800">
    <property type="entry name" value="Pellino_fam"/>
</dbReference>
<dbReference type="InterPro" id="IPR048334">
    <property type="entry name" value="Pellino_FHA"/>
</dbReference>
<dbReference type="InterPro" id="IPR048335">
    <property type="entry name" value="Pellino_RING"/>
</dbReference>
<dbReference type="PANTHER" id="PTHR12098:SF4">
    <property type="entry name" value="E3 UBIQUITIN-PROTEIN LIGASE PELLINO HOMOLOG 1"/>
    <property type="match status" value="1"/>
</dbReference>
<dbReference type="PANTHER" id="PTHR12098">
    <property type="entry name" value="E3 UBIQUITIN-PROTEIN LIGASE PELLINO-RELATED"/>
    <property type="match status" value="1"/>
</dbReference>
<dbReference type="Pfam" id="PF04710">
    <property type="entry name" value="Pellino_FHA"/>
    <property type="match status" value="1"/>
</dbReference>
<dbReference type="Pfam" id="PF20723">
    <property type="entry name" value="Pellino_RING"/>
    <property type="match status" value="1"/>
</dbReference>
<dbReference type="PIRSF" id="PIRSF038886">
    <property type="entry name" value="Pellino"/>
    <property type="match status" value="1"/>
</dbReference>
<sequence length="418" mass="46259">MFSPDQENHPSKAPVKYGELIVLGYNGSLPNGDRGRRKSRFALFKRPKANGVKPSTVHIACTPQAAKAISNKDQHSISYTLSRAQTVVVEYTHDSNTDMFQIGRSTESPIDFVVTDTVPGSQSNSDTQSVQSTISRFACRIICERSPPFTARIYAAGFDSSKNIFLGEKAAKWKTSDGQMDGLTTNGVLVMHPRNGFTEDSKPGIWREISVCGNVFSLRETRSAQQRGKMVEIETNQLQDGSLIDLCGATLLWRTAEGLSHTPTVKHLEALRQEINAARPQCPVGFNTLAFPSMKRKDVVDEKQPWVYLNCGHVHGYHNWGNKEERDGKDRECPMCRSVGPYVPLWLGCEAGFYVDAGPPTHAFSPCGHVCSEKTTAYWSQIPLPHGTHTFHAACPFCAHQLAGEQGYIRLIFQGPLD</sequence>
<reference key="1">
    <citation type="journal article" date="2001" name="Cytogenet. Cell Genet.">
        <title>Assignment of homologous genes, Peli1/PELI1 and Peli2/PELI2, for the Pelle adaptor protein Pellino to mouse chromosomes 11 and 14 and human chromosomes 2p13.3 and 14q21, respectively, by physical and radiation hybrid mapping.</title>
        <authorList>
            <person name="Resch K."/>
            <person name="Jockusch H."/>
            <person name="Schmitt-John T."/>
        </authorList>
    </citation>
    <scope>NUCLEOTIDE SEQUENCE [MRNA]</scope>
    <source>
        <strain>C57BL/6J</strain>
    </source>
</reference>
<reference key="2">
    <citation type="journal article" date="2005" name="Science">
        <title>The transcriptional landscape of the mammalian genome.</title>
        <authorList>
            <person name="Carninci P."/>
            <person name="Kasukawa T."/>
            <person name="Katayama S."/>
            <person name="Gough J."/>
            <person name="Frith M.C."/>
            <person name="Maeda N."/>
            <person name="Oyama R."/>
            <person name="Ravasi T."/>
            <person name="Lenhard B."/>
            <person name="Wells C."/>
            <person name="Kodzius R."/>
            <person name="Shimokawa K."/>
            <person name="Bajic V.B."/>
            <person name="Brenner S.E."/>
            <person name="Batalov S."/>
            <person name="Forrest A.R."/>
            <person name="Zavolan M."/>
            <person name="Davis M.J."/>
            <person name="Wilming L.G."/>
            <person name="Aidinis V."/>
            <person name="Allen J.E."/>
            <person name="Ambesi-Impiombato A."/>
            <person name="Apweiler R."/>
            <person name="Aturaliya R.N."/>
            <person name="Bailey T.L."/>
            <person name="Bansal M."/>
            <person name="Baxter L."/>
            <person name="Beisel K.W."/>
            <person name="Bersano T."/>
            <person name="Bono H."/>
            <person name="Chalk A.M."/>
            <person name="Chiu K.P."/>
            <person name="Choudhary V."/>
            <person name="Christoffels A."/>
            <person name="Clutterbuck D.R."/>
            <person name="Crowe M.L."/>
            <person name="Dalla E."/>
            <person name="Dalrymple B.P."/>
            <person name="de Bono B."/>
            <person name="Della Gatta G."/>
            <person name="di Bernardo D."/>
            <person name="Down T."/>
            <person name="Engstrom P."/>
            <person name="Fagiolini M."/>
            <person name="Faulkner G."/>
            <person name="Fletcher C.F."/>
            <person name="Fukushima T."/>
            <person name="Furuno M."/>
            <person name="Futaki S."/>
            <person name="Gariboldi M."/>
            <person name="Georgii-Hemming P."/>
            <person name="Gingeras T.R."/>
            <person name="Gojobori T."/>
            <person name="Green R.E."/>
            <person name="Gustincich S."/>
            <person name="Harbers M."/>
            <person name="Hayashi Y."/>
            <person name="Hensch T.K."/>
            <person name="Hirokawa N."/>
            <person name="Hill D."/>
            <person name="Huminiecki L."/>
            <person name="Iacono M."/>
            <person name="Ikeo K."/>
            <person name="Iwama A."/>
            <person name="Ishikawa T."/>
            <person name="Jakt M."/>
            <person name="Kanapin A."/>
            <person name="Katoh M."/>
            <person name="Kawasawa Y."/>
            <person name="Kelso J."/>
            <person name="Kitamura H."/>
            <person name="Kitano H."/>
            <person name="Kollias G."/>
            <person name="Krishnan S.P."/>
            <person name="Kruger A."/>
            <person name="Kummerfeld S.K."/>
            <person name="Kurochkin I.V."/>
            <person name="Lareau L.F."/>
            <person name="Lazarevic D."/>
            <person name="Lipovich L."/>
            <person name="Liu J."/>
            <person name="Liuni S."/>
            <person name="McWilliam S."/>
            <person name="Madan Babu M."/>
            <person name="Madera M."/>
            <person name="Marchionni L."/>
            <person name="Matsuda H."/>
            <person name="Matsuzawa S."/>
            <person name="Miki H."/>
            <person name="Mignone F."/>
            <person name="Miyake S."/>
            <person name="Morris K."/>
            <person name="Mottagui-Tabar S."/>
            <person name="Mulder N."/>
            <person name="Nakano N."/>
            <person name="Nakauchi H."/>
            <person name="Ng P."/>
            <person name="Nilsson R."/>
            <person name="Nishiguchi S."/>
            <person name="Nishikawa S."/>
            <person name="Nori F."/>
            <person name="Ohara O."/>
            <person name="Okazaki Y."/>
            <person name="Orlando V."/>
            <person name="Pang K.C."/>
            <person name="Pavan W.J."/>
            <person name="Pavesi G."/>
            <person name="Pesole G."/>
            <person name="Petrovsky N."/>
            <person name="Piazza S."/>
            <person name="Reed J."/>
            <person name="Reid J.F."/>
            <person name="Ring B.Z."/>
            <person name="Ringwald M."/>
            <person name="Rost B."/>
            <person name="Ruan Y."/>
            <person name="Salzberg S.L."/>
            <person name="Sandelin A."/>
            <person name="Schneider C."/>
            <person name="Schoenbach C."/>
            <person name="Sekiguchi K."/>
            <person name="Semple C.A."/>
            <person name="Seno S."/>
            <person name="Sessa L."/>
            <person name="Sheng Y."/>
            <person name="Shibata Y."/>
            <person name="Shimada H."/>
            <person name="Shimada K."/>
            <person name="Silva D."/>
            <person name="Sinclair B."/>
            <person name="Sperling S."/>
            <person name="Stupka E."/>
            <person name="Sugiura K."/>
            <person name="Sultana R."/>
            <person name="Takenaka Y."/>
            <person name="Taki K."/>
            <person name="Tammoja K."/>
            <person name="Tan S.L."/>
            <person name="Tang S."/>
            <person name="Taylor M.S."/>
            <person name="Tegner J."/>
            <person name="Teichmann S.A."/>
            <person name="Ueda H.R."/>
            <person name="van Nimwegen E."/>
            <person name="Verardo R."/>
            <person name="Wei C.L."/>
            <person name="Yagi K."/>
            <person name="Yamanishi H."/>
            <person name="Zabarovsky E."/>
            <person name="Zhu S."/>
            <person name="Zimmer A."/>
            <person name="Hide W."/>
            <person name="Bult C."/>
            <person name="Grimmond S.M."/>
            <person name="Teasdale R.D."/>
            <person name="Liu E.T."/>
            <person name="Brusic V."/>
            <person name="Quackenbush J."/>
            <person name="Wahlestedt C."/>
            <person name="Mattick J.S."/>
            <person name="Hume D.A."/>
            <person name="Kai C."/>
            <person name="Sasaki D."/>
            <person name="Tomaru Y."/>
            <person name="Fukuda S."/>
            <person name="Kanamori-Katayama M."/>
            <person name="Suzuki M."/>
            <person name="Aoki J."/>
            <person name="Arakawa T."/>
            <person name="Iida J."/>
            <person name="Imamura K."/>
            <person name="Itoh M."/>
            <person name="Kato T."/>
            <person name="Kawaji H."/>
            <person name="Kawagashira N."/>
            <person name="Kawashima T."/>
            <person name="Kojima M."/>
            <person name="Kondo S."/>
            <person name="Konno H."/>
            <person name="Nakano K."/>
            <person name="Ninomiya N."/>
            <person name="Nishio T."/>
            <person name="Okada M."/>
            <person name="Plessy C."/>
            <person name="Shibata K."/>
            <person name="Shiraki T."/>
            <person name="Suzuki S."/>
            <person name="Tagami M."/>
            <person name="Waki K."/>
            <person name="Watahiki A."/>
            <person name="Okamura-Oho Y."/>
            <person name="Suzuki H."/>
            <person name="Kawai J."/>
            <person name="Hayashizaki Y."/>
        </authorList>
    </citation>
    <scope>NUCLEOTIDE SEQUENCE [LARGE SCALE MRNA]</scope>
    <source>
        <strain>C57BL/6J</strain>
        <tissue>Brain</tissue>
        <tissue>Head</tissue>
        <tissue>Tongue</tissue>
    </source>
</reference>
<reference key="3">
    <citation type="journal article" date="2004" name="Genome Res.">
        <title>The status, quality, and expansion of the NIH full-length cDNA project: the Mammalian Gene Collection (MGC).</title>
        <authorList>
            <consortium name="The MGC Project Team"/>
        </authorList>
    </citation>
    <scope>NUCLEOTIDE SEQUENCE [LARGE SCALE MRNA]</scope>
    <source>
        <tissue>Mammary tumor</tissue>
    </source>
</reference>
<reference key="4">
    <citation type="journal article" date="2006" name="Nat. Immunol.">
        <title>Smad6 negatively regulates interleukin 1-receptor-Toll-like receptor signaling through direct interaction with the adapter Pellino-1.</title>
        <authorList>
            <person name="Choi K.C."/>
            <person name="Lee Y.S."/>
            <person name="Lim S."/>
            <person name="Choi H.K."/>
            <person name="Lee C.H."/>
            <person name="Lee E.K."/>
            <person name="Hong S."/>
            <person name="Kim I.H."/>
            <person name="Kim S.J."/>
            <person name="Park S.H."/>
        </authorList>
    </citation>
    <scope>FUNCTION</scope>
    <scope>INTERACTION WITH IRAK1; IRAK4; SMAD6 AND TRAF6</scope>
</reference>
<reference key="5">
    <citation type="journal article" date="2018" name="Mol. Cell">
        <title>PELI1 selectively targets kinase-active RIP3 for ubiquitylation-dependent proteasomal degradation.</title>
        <authorList>
            <person name="Choi S.W."/>
            <person name="Park H.H."/>
            <person name="Kim S."/>
            <person name="Chung J.M."/>
            <person name="Noh H.J."/>
            <person name="Kim S.K."/>
            <person name="Song H.K."/>
            <person name="Lee C.W."/>
            <person name="Morgan M.J."/>
            <person name="Kang H.C."/>
            <person name="Kim Y.S."/>
        </authorList>
    </citation>
    <scope>FUNCTION</scope>
    <scope>INTERACTION WITH RIPK1 AND RIPK3</scope>
</reference>
<reference key="6">
    <citation type="journal article" date="2019" name="Sci. Rep.">
        <title>Peli1 controls the survival of dopaminergic neurons through modulating microglia-mediated neuroinflammation.</title>
        <authorList>
            <person name="Dai D."/>
            <person name="Yuan J."/>
            <person name="Wang Y."/>
            <person name="Xu J."/>
            <person name="Mao C."/>
            <person name="Xiao Y."/>
        </authorList>
    </citation>
    <scope>FUNCTION</scope>
    <scope>DISRUPTION PHENOTYPE</scope>
</reference>
<reference key="7">
    <citation type="journal article" date="2021" name="EMBO J.">
        <title>The E3 ubiquitin ligase Peli1 regulates the metabolic actions of mTORC1 to suppress antitumor T cell responses.</title>
        <authorList>
            <person name="Ko C.J."/>
            <person name="Zhang L."/>
            <person name="Jie Z."/>
            <person name="Zhu L."/>
            <person name="Zhou X."/>
            <person name="Xie X."/>
            <person name="Gao T."/>
            <person name="Yang J.Y."/>
            <person name="Cheng X."/>
            <person name="Sun S.C."/>
        </authorList>
    </citation>
    <scope>FUNCTION</scope>
    <scope>DISRUPTION PHENOTYPE</scope>
</reference>
<reference key="8">
    <citation type="journal article" date="2021" name="Cell Rep.">
        <title>Peli1 facilitates NLRP3 inflammasome activation by mediating ASC ubiquitination.</title>
        <authorList>
            <person name="Zhang L."/>
            <person name="Ko C.J."/>
            <person name="Li Y."/>
            <person name="Jie Z."/>
            <person name="Zhu L."/>
            <person name="Zhou X."/>
            <person name="Xie X."/>
            <person name="Gao T."/>
            <person name="Liu T."/>
            <person name="Cheng X."/>
            <person name="Sun S.C."/>
        </authorList>
    </citation>
    <scope>FUNCTION</scope>
    <scope>DISRUPTION PHENOTYPE</scope>
</reference>
<organism>
    <name type="scientific">Mus musculus</name>
    <name type="common">Mouse</name>
    <dbReference type="NCBI Taxonomy" id="10090"/>
    <lineage>
        <taxon>Eukaryota</taxon>
        <taxon>Metazoa</taxon>
        <taxon>Chordata</taxon>
        <taxon>Craniata</taxon>
        <taxon>Vertebrata</taxon>
        <taxon>Euteleostomi</taxon>
        <taxon>Mammalia</taxon>
        <taxon>Eutheria</taxon>
        <taxon>Euarchontoglires</taxon>
        <taxon>Glires</taxon>
        <taxon>Rodentia</taxon>
        <taxon>Myomorpha</taxon>
        <taxon>Muroidea</taxon>
        <taxon>Muridae</taxon>
        <taxon>Murinae</taxon>
        <taxon>Mus</taxon>
        <taxon>Mus</taxon>
    </lineage>
</organism>
<proteinExistence type="evidence at protein level"/>
<keyword id="KW-0158">Chromosome</keyword>
<keyword id="KW-0227">DNA damage</keyword>
<keyword id="KW-0234">DNA repair</keyword>
<keyword id="KW-0597">Phosphoprotein</keyword>
<keyword id="KW-1185">Reference proteome</keyword>
<keyword id="KW-0808">Transferase</keyword>
<keyword id="KW-0832">Ubl conjugation</keyword>
<keyword id="KW-0833">Ubl conjugation pathway</keyword>
<feature type="chain" id="PRO_0000194173" description="E3 ubiquitin-protein ligase pellino homolog 1">
    <location>
        <begin position="1"/>
        <end position="418"/>
    </location>
</feature>
<feature type="domain" description="FHA; atypical" evidence="2">
    <location>
        <begin position="13"/>
        <end position="200"/>
    </location>
</feature>
<feature type="region of interest" description="Ring-like domain; necessary for ubiquitination of RIPK3" evidence="1">
    <location>
        <begin position="311"/>
        <end position="399"/>
    </location>
</feature>
<feature type="modified residue" description="Phosphoserine" evidence="1">
    <location>
        <position position="121"/>
    </location>
</feature>
<feature type="modified residue" description="Phosphothreonine" evidence="1">
    <location>
        <position position="127"/>
    </location>
</feature>
<feature type="sequence conflict" description="In Ref. 1; AAG15391." evidence="8" ref="1">
    <original>DQE</original>
    <variation>GSR</variation>
    <location>
        <begin position="5"/>
        <end position="7"/>
    </location>
</feature>
<name>PELI1_MOUSE</name>
<comment type="function">
    <text evidence="1 3 4 5 6 7">E3 ubiquitin ligase catalyzing the covalent attachment of ubiquitin moieties onto substrate proteins (PubMed:16951688, PubMed:29883609). Involved in the TLR and IL-1 signaling pathways via interaction with the complex containing IRAK kinases and TRAF6 (By similarity). Acts as a positive regulator of inflammatory response in microglia through activation of NF-kappa-B and MAP kinase (PubMed:31142803). Mediates 'Lys-63'-linked polyubiquitination of IRAK1 allowing subsequent NF-kappa-B activation (PubMed:16951688). Conjugates 'Lys-63'-linked ubiquitin chains to the adapter protein ASC/PYCARD, which in turn is crucial for NLRP3 inflammasome activation (PubMed:34706239). Mediates 'Lys-48'-linked polyubiquitination of RIPK3 leading to its subsequent proteasome-dependent degradation; preferentially recognizes and mediates the degradation of the 'Thr-182' phosphorylated form of RIPK3. Negatively regulates necroptosis by reducing RIPK3 expression. Mediates 'Lys-63'-linked ubiquitination of RIPK1. Following phosphorylation by ATM, catalyzes 'Lys-63'-linked ubiquitination of NBN, promoting DNA repair via homologous recombination. Negatively regulates activation of the metabolic mTORC1 signaling pathway by mediating 'Lys-63'-linked ubiquitination of mTORC1-inhibitory protein TSC1 and thereby promoting TSC1/TSC2 complex stability (PubMed:33215753).</text>
</comment>
<comment type="catalytic activity">
    <reaction evidence="1">
        <text>S-ubiquitinyl-[E2 ubiquitin-conjugating enzyme]-L-cysteine + [acceptor protein]-L-lysine = [E2 ubiquitin-conjugating enzyme]-L-cysteine + N(6)-ubiquitinyl-[acceptor protein]-L-lysine.</text>
        <dbReference type="EC" id="2.3.2.27"/>
    </reaction>
</comment>
<comment type="pathway">
    <text evidence="4">Protein modification; protein ubiquitination.</text>
</comment>
<comment type="subunit">
    <text evidence="1 3 4">Interacts with MAP3K7 (By similarity). Upon IL1B treatment, forms a complex with TRAF6, IRAK1, IRAK4 and MYD88; this complex recruits MAP3K7/TAK1, TAB1 and TAB2 to mediate NF-kappa-B activation. Direct binding of SMAD6 to PELI1 prevents the complex formation and hence negatively regulates IL1R-TLR signaling and eventually NF-kappa-B-mediated gene expression (PubMed:16951688). Interacts (via atypical FHA domain) with RIPK3 (PubMed:29883609). Binds preferentially to the 'Thr-182' phosphorylated form of RIPK3 (By similarity). Interacts with RIPK1 (PubMed:29883609).</text>
</comment>
<comment type="subcellular location">
    <subcellularLocation>
        <location evidence="1">Chromosome</location>
    </subcellularLocation>
    <text evidence="1">Localizes to DNA double-strand breaks (DSBs) in response to DNA damage.</text>
</comment>
<comment type="PTM">
    <text evidence="1">Phosphorylation by IRAK1 and IRAK4 enhances its E3 ligase activity. Phosphorylated by ATM in response to DNA damage, promoting localization to DNA double-strand breaks (DSBs) and ability to mediate 'Lys-63'-linked ubiquitination of NBN.</text>
</comment>
<comment type="PTM">
    <text evidence="1">Sumoylated.</text>
</comment>
<comment type="disruption phenotype">
    <text evidence="5 6 7">Peli1 deficiency suppresses inflammation-induced neuron death in substantia nigra (PubMed:31142803). Promotes antitumor immunity in different mouse tumor models (PubMed:33215753). In addition, Peli1 deficiency alleviates inflammation and reduces serum IL-1beta (PubMed:34706239).</text>
</comment>
<comment type="similarity">
    <text evidence="8">Belongs to the pellino family.</text>
</comment>
<comment type="sequence caution" evidence="8">
    <conflict type="erroneous initiation">
        <sequence resource="EMBL-CDS" id="BAC36351"/>
    </conflict>
    <text>Truncated N-terminus.</text>
</comment>
<gene>
    <name type="primary">Peli1</name>
</gene>
<accession>Q8C669</accession>
<accession>Q91YL9</accession>
<accession>Q9CV22</accession>
<accession>Q9ERJ8</accession>
<evidence type="ECO:0000250" key="1">
    <source>
        <dbReference type="UniProtKB" id="Q96FA3"/>
    </source>
</evidence>
<evidence type="ECO:0000250" key="2">
    <source>
        <dbReference type="UniProtKB" id="Q9HAT8"/>
    </source>
</evidence>
<evidence type="ECO:0000269" key="3">
    <source>
    </source>
</evidence>
<evidence type="ECO:0000269" key="4">
    <source>
    </source>
</evidence>
<evidence type="ECO:0000269" key="5">
    <source>
    </source>
</evidence>
<evidence type="ECO:0000269" key="6">
    <source>
    </source>
</evidence>
<evidence type="ECO:0000269" key="7">
    <source>
    </source>
</evidence>
<evidence type="ECO:0000305" key="8"/>